<comment type="function">
    <text evidence="2 5">Catalyzes the NADPH-dependent formation of L-aspartate-semialdehyde (L-ASA) by the reductive dephosphorylation of L-aspartyl-4-phosphate (PubMed:15752328). Is essential for the growth and pathogenicity of M.tuberculosis, and for the generation of the bacterial cell wall (PubMed:26437401).</text>
</comment>
<comment type="catalytic activity">
    <reaction evidence="2 3">
        <text>L-aspartate 4-semialdehyde + phosphate + NADP(+) = 4-phospho-L-aspartate + NADPH + H(+)</text>
        <dbReference type="Rhea" id="RHEA:24284"/>
        <dbReference type="ChEBI" id="CHEBI:15378"/>
        <dbReference type="ChEBI" id="CHEBI:43474"/>
        <dbReference type="ChEBI" id="CHEBI:57535"/>
        <dbReference type="ChEBI" id="CHEBI:57783"/>
        <dbReference type="ChEBI" id="CHEBI:58349"/>
        <dbReference type="ChEBI" id="CHEBI:537519"/>
        <dbReference type="EC" id="1.2.1.11"/>
    </reaction>
</comment>
<comment type="biophysicochemical properties">
    <kinetics>
        <KM evidence="2">955 uM for L-aspartate 4-semialdehyde</KM>
        <KM evidence="2">65 uM for NADP(+)</KM>
        <KM evidence="2">11.4 mM for phosphate</KM>
        <Vmax evidence="2">51.84 umol/min/mg enzyme towards L-aspartate 4-semialdehyde</Vmax>
        <Vmax evidence="2">43.74 umol/min/mg enzyme towards NADP(+)</Vmax>
        <Vmax evidence="2">44.04 umol/min/mg enzyme towards phosphate</Vmax>
    </kinetics>
</comment>
<comment type="pathway">
    <text>Amino-acid biosynthesis; L-lysine biosynthesis via DAP pathway; (S)-tetrahydrodipicolinate from L-aspartate: step 2/4.</text>
</comment>
<comment type="pathway">
    <text>Amino-acid biosynthesis; L-methionine biosynthesis via de novo pathway; L-homoserine from L-aspartate: step 2/3.</text>
</comment>
<comment type="pathway">
    <text>Amino-acid biosynthesis; L-threonine biosynthesis; L-threonine from L-aspartate: step 2/5.</text>
</comment>
<comment type="subunit">
    <text evidence="3 4">Homodimer.</text>
</comment>
<comment type="disruption phenotype">
    <text evidence="5">Deletion of this gene inhibits bacterial growth. The mutant cells lose an average of 77.8% of their cell wall materials, exhibit altered morphology, and have a reduced capacity to infect macrophages.</text>
</comment>
<comment type="similarity">
    <text evidence="8">Belongs to the aspartate-semialdehyde dehydrogenase family.</text>
</comment>
<sequence length="345" mass="36230">MGLSIGIVGATGQVGQVMRTLLDERDFPASAVRFFASARSQGRKLAFRGQEIEVEDAETADPSGLDIALFSAGSAMSKVQAPRFAAAGVTVIDNSSAWRKDPDVPLVVSEVNFERDAHRRPKGIIANPNCTTMAAMPVLKVLHDEARLVRLVVSSYQAVSGSGLAGVAELAEQARAVIGGAEQLVYDGGALEFPPPNTYVAPIAFNVVPLAGSLVDDGSGETDEDQKLRFESRKILGIPDLLVSGTCVRVPVFTGHSLSINAEFAQPLSPERARELLDGATGVQLVDVPTPLAAAGVDESLVGRIRRDPGVPDGRGLALFVSGDNLRKGAALNTIQIAELLTADL</sequence>
<evidence type="ECO:0000250" key="1"/>
<evidence type="ECO:0000269" key="2">
    <source>
    </source>
</evidence>
<evidence type="ECO:0000269" key="3">
    <source>
    </source>
</evidence>
<evidence type="ECO:0000269" key="4">
    <source>
    </source>
</evidence>
<evidence type="ECO:0000269" key="5">
    <source>
    </source>
</evidence>
<evidence type="ECO:0000303" key="6">
    <source>
    </source>
</evidence>
<evidence type="ECO:0000303" key="7">
    <source>
    </source>
</evidence>
<evidence type="ECO:0000305" key="8"/>
<evidence type="ECO:0000305" key="9">
    <source>
    </source>
</evidence>
<evidence type="ECO:0007829" key="10">
    <source>
        <dbReference type="PDB" id="3TZ6"/>
    </source>
</evidence>
<name>DHAS_MYCTU</name>
<reference key="1">
    <citation type="submission" date="1997-02" db="EMBL/GenBank/DDBJ databases">
        <title>Mycobacterium tuberculosis ask-alpha, ask-beta and asd genes.</title>
        <authorList>
            <person name="Gilker J.M."/>
            <person name="Jucker M.T."/>
        </authorList>
    </citation>
    <scope>NUCLEOTIDE SEQUENCE [GENOMIC DNA]</scope>
</reference>
<reference key="2">
    <citation type="journal article" date="2005" name="J. Appl. Microbiol.">
        <title>Cloning and characterization of aspartate-beta-semialdehyde dehydrogenase from Mycobacterium tuberculosis H37 Rv.</title>
        <authorList>
            <person name="Shafiani S."/>
            <person name="Sharma P."/>
            <person name="Vohra R.M."/>
            <person name="Tewari R."/>
        </authorList>
    </citation>
    <scope>NUCLEOTIDE SEQUENCE [GENOMIC DNA]</scope>
    <scope>FUNCTION</scope>
    <scope>CATALYTIC ACTIVITY</scope>
    <scope>KINETIC PARAMETERS</scope>
    <source>
        <strain>ATCC 25618 / H37Rv</strain>
    </source>
</reference>
<reference key="3">
    <citation type="journal article" date="1998" name="Nature">
        <title>Deciphering the biology of Mycobacterium tuberculosis from the complete genome sequence.</title>
        <authorList>
            <person name="Cole S.T."/>
            <person name="Brosch R."/>
            <person name="Parkhill J."/>
            <person name="Garnier T."/>
            <person name="Churcher C.M."/>
            <person name="Harris D.E."/>
            <person name="Gordon S.V."/>
            <person name="Eiglmeier K."/>
            <person name="Gas S."/>
            <person name="Barry C.E. III"/>
            <person name="Tekaia F."/>
            <person name="Badcock K."/>
            <person name="Basham D."/>
            <person name="Brown D."/>
            <person name="Chillingworth T."/>
            <person name="Connor R."/>
            <person name="Davies R.M."/>
            <person name="Devlin K."/>
            <person name="Feltwell T."/>
            <person name="Gentles S."/>
            <person name="Hamlin N."/>
            <person name="Holroyd S."/>
            <person name="Hornsby T."/>
            <person name="Jagels K."/>
            <person name="Krogh A."/>
            <person name="McLean J."/>
            <person name="Moule S."/>
            <person name="Murphy L.D."/>
            <person name="Oliver S."/>
            <person name="Osborne J."/>
            <person name="Quail M.A."/>
            <person name="Rajandream M.A."/>
            <person name="Rogers J."/>
            <person name="Rutter S."/>
            <person name="Seeger K."/>
            <person name="Skelton S."/>
            <person name="Squares S."/>
            <person name="Squares R."/>
            <person name="Sulston J.E."/>
            <person name="Taylor K."/>
            <person name="Whitehead S."/>
            <person name="Barrell B.G."/>
        </authorList>
    </citation>
    <scope>NUCLEOTIDE SEQUENCE [LARGE SCALE GENOMIC DNA]</scope>
    <source>
        <strain>ATCC 25618 / H37Rv</strain>
    </source>
</reference>
<reference key="4">
    <citation type="journal article" date="2008" name="Acta Crystallogr. F">
        <title>Purification, crystallization and preliminary X-ray diffraction analysis of aspartate semialdehyde dehydrogenase (Rv3708c) from Mycobacterium tuberculosis.</title>
        <authorList>
            <person name="Vyas R."/>
            <person name="Kumar V."/>
            <person name="Panjikar S."/>
            <person name="Karthikeyan S."/>
            <person name="Kishan K.V."/>
            <person name="Tewari R."/>
            <person name="Weiss M.S."/>
        </authorList>
    </citation>
    <scope>CRYSTALLIZATION</scope>
    <scope>CATALYTIC ACTIVITY</scope>
    <scope>SUBUNIT</scope>
    <source>
        <strain>ATCC 25618 / H37Rv</strain>
    </source>
</reference>
<reference key="5">
    <citation type="journal article" date="2011" name="Mol. Cell. Proteomics">
        <title>Proteogenomic analysis of Mycobacterium tuberculosis by high resolution mass spectrometry.</title>
        <authorList>
            <person name="Kelkar D.S."/>
            <person name="Kumar D."/>
            <person name="Kumar P."/>
            <person name="Balakrishnan L."/>
            <person name="Muthusamy B."/>
            <person name="Yadav A.K."/>
            <person name="Shrivastava P."/>
            <person name="Marimuthu A."/>
            <person name="Anand S."/>
            <person name="Sundaram H."/>
            <person name="Kingsbury R."/>
            <person name="Harsha H.C."/>
            <person name="Nair B."/>
            <person name="Prasad T.S."/>
            <person name="Chauhan D.S."/>
            <person name="Katoch K."/>
            <person name="Katoch V.M."/>
            <person name="Kumar P."/>
            <person name="Chaerkady R."/>
            <person name="Ramachandran S."/>
            <person name="Dash D."/>
            <person name="Pandey A."/>
        </authorList>
    </citation>
    <scope>IDENTIFICATION BY MASS SPECTROMETRY [LARGE SCALE ANALYSIS]</scope>
    <source>
        <strain>ATCC 25618 / H37Rv</strain>
    </source>
</reference>
<reference key="6">
    <citation type="journal article" date="2008" name="J. Mol. Model.">
        <title>Molecular modelling and comparative structural account of aspartyl beta-semialdehyde dehydrogenase of Mycobacterium tuberculosis (H37Rv).</title>
        <authorList>
            <person name="Singh A."/>
            <person name="Kushwaha H.R."/>
            <person name="Sharma P."/>
        </authorList>
    </citation>
    <scope>3D-STRUCTURE MODELING</scope>
    <source>
        <strain>H37Rv</strain>
    </source>
</reference>
<reference key="7">
    <citation type="journal article" date="2015" name="Int. J. Mol. Sci.">
        <title>Identification and validation of aspartic acid semialdehyde dehydrogenase as a new anti-Mycobacterium tuberculosis target.</title>
        <authorList>
            <person name="Meng J."/>
            <person name="Yang Y."/>
            <person name="Xiao C."/>
            <person name="Guan Y."/>
            <person name="Hao X."/>
            <person name="Deng Q."/>
            <person name="Lu Z."/>
        </authorList>
    </citation>
    <scope>DISRUPTION PHENOTYPE</scope>
    <scope>IDENTIFICATION AS A DRUG TARGET</scope>
    <source>
        <strain>H37Rv</strain>
    </source>
</reference>
<reference key="8">
    <citation type="journal article" date="2015" name="J. Biomol. Struct. Dyn.">
        <title>Pharmacoinformatics analysis to identify inhibitors of Mtb-ASADH.</title>
        <authorList>
            <person name="Kumar R."/>
            <person name="Garg P."/>
            <person name="Bharatam P.V."/>
        </authorList>
    </citation>
    <scope>IN SILICO IDENTIFICATION OF INHIBITORS</scope>
</reference>
<reference key="9">
    <citation type="journal article" date="2015" name="J. Biomol. Struct. Dyn.">
        <title>Shape-based virtual screening, docking, and molecular dynamics simulations to identify Mtb-ASADH inhibitors.</title>
        <authorList>
            <person name="Kumar R."/>
            <person name="Garg P."/>
            <person name="Bharatam P.V."/>
        </authorList>
    </citation>
    <scope>IN SILICO IDENTIFICATION OF INHIBITORS</scope>
</reference>
<reference key="10">
    <citation type="journal article" date="2012" name="Acta Crystallogr. D">
        <title>Structures of ternary complexes of aspartate-semialdehyde dehydrogenase (Rv3708c) from Mycobacterium tuberculosis H37Rv.</title>
        <authorList>
            <person name="Vyas R."/>
            <person name="Tewari R."/>
            <person name="Weiss M.S."/>
            <person name="Karthikeyan S."/>
        </authorList>
    </citation>
    <scope>X-RAY CRYSTALLOGRAPHY (1.95 ANGSTROMS) OF 2-345</scope>
    <scope>ACTIVE SITE</scope>
    <scope>SUBUNIT</scope>
    <source>
        <strain>H37Rv</strain>
    </source>
</reference>
<protein>
    <recommendedName>
        <fullName evidence="7">Aspartate-semialdehyde dehydrogenase</fullName>
        <shortName>ASA dehydrogenase</shortName>
        <shortName evidence="7">ASADH</shortName>
        <ecNumber evidence="2 3">1.2.1.11</ecNumber>
    </recommendedName>
    <alternativeName>
        <fullName evidence="6">Aspartate-beta-semialdehyde dehydrogenase</fullName>
    </alternativeName>
</protein>
<accession>P9WNX5</accession>
<accession>L0TDK5</accession>
<accession>P0A542</accession>
<accession>P47730</accession>
<accession>P97049</accession>
<accession>Q597F4</accession>
<dbReference type="EC" id="1.2.1.11" evidence="2 3"/>
<dbReference type="EMBL" id="U90239">
    <property type="protein sequence ID" value="AAB49996.1"/>
    <property type="molecule type" value="Genomic_DNA"/>
</dbReference>
<dbReference type="EMBL" id="AY372113">
    <property type="protein sequence ID" value="AAQ75346.1"/>
    <property type="molecule type" value="Genomic_DNA"/>
</dbReference>
<dbReference type="EMBL" id="AL123456">
    <property type="protein sequence ID" value="CCP46534.1"/>
    <property type="molecule type" value="Genomic_DNA"/>
</dbReference>
<dbReference type="PIR" id="E70794">
    <property type="entry name" value="E70794"/>
</dbReference>
<dbReference type="RefSeq" id="NP_218225.1">
    <property type="nucleotide sequence ID" value="NC_000962.3"/>
</dbReference>
<dbReference type="RefSeq" id="WP_003419825.1">
    <property type="nucleotide sequence ID" value="NZ_NVQJ01000009.1"/>
</dbReference>
<dbReference type="PDB" id="3TZ6">
    <property type="method" value="X-ray"/>
    <property type="resolution" value="1.95 A"/>
    <property type="chains" value="A=2-345"/>
</dbReference>
<dbReference type="PDB" id="3VOS">
    <property type="method" value="X-ray"/>
    <property type="resolution" value="2.18 A"/>
    <property type="chains" value="A=2-345"/>
</dbReference>
<dbReference type="PDBsum" id="3TZ6"/>
<dbReference type="PDBsum" id="3VOS"/>
<dbReference type="SMR" id="P9WNX5"/>
<dbReference type="FunCoup" id="P9WNX5">
    <property type="interactions" value="369"/>
</dbReference>
<dbReference type="STRING" id="83332.Rv3708c"/>
<dbReference type="PaxDb" id="83332-Rv3708c"/>
<dbReference type="GeneID" id="885118"/>
<dbReference type="KEGG" id="mtu:Rv3708c"/>
<dbReference type="KEGG" id="mtv:RVBD_3708c"/>
<dbReference type="TubercuList" id="Rv3708c"/>
<dbReference type="eggNOG" id="COG0136">
    <property type="taxonomic scope" value="Bacteria"/>
</dbReference>
<dbReference type="InParanoid" id="P9WNX5"/>
<dbReference type="OrthoDB" id="9805684at2"/>
<dbReference type="PhylomeDB" id="P9WNX5"/>
<dbReference type="BRENDA" id="1.2.1.11">
    <property type="organism ID" value="3445"/>
</dbReference>
<dbReference type="SABIO-RK" id="P9WNX5"/>
<dbReference type="UniPathway" id="UPA00034">
    <property type="reaction ID" value="UER00016"/>
</dbReference>
<dbReference type="UniPathway" id="UPA00050">
    <property type="reaction ID" value="UER00463"/>
</dbReference>
<dbReference type="UniPathway" id="UPA00051">
    <property type="reaction ID" value="UER00464"/>
</dbReference>
<dbReference type="EvolutionaryTrace" id="P9WNX5"/>
<dbReference type="Proteomes" id="UP000001584">
    <property type="component" value="Chromosome"/>
</dbReference>
<dbReference type="GO" id="GO:0009274">
    <property type="term" value="C:peptidoglycan-based cell wall"/>
    <property type="evidence" value="ECO:0007005"/>
    <property type="project" value="MTBBASE"/>
</dbReference>
<dbReference type="GO" id="GO:0005886">
    <property type="term" value="C:plasma membrane"/>
    <property type="evidence" value="ECO:0007005"/>
    <property type="project" value="MTBBASE"/>
</dbReference>
<dbReference type="GO" id="GO:0004073">
    <property type="term" value="F:aspartate-semialdehyde dehydrogenase activity"/>
    <property type="evidence" value="ECO:0000314"/>
    <property type="project" value="MTBBASE"/>
</dbReference>
<dbReference type="GO" id="GO:0051287">
    <property type="term" value="F:NAD binding"/>
    <property type="evidence" value="ECO:0007669"/>
    <property type="project" value="InterPro"/>
</dbReference>
<dbReference type="GO" id="GO:0050661">
    <property type="term" value="F:NADP binding"/>
    <property type="evidence" value="ECO:0007669"/>
    <property type="project" value="UniProtKB-UniRule"/>
</dbReference>
<dbReference type="GO" id="GO:0046983">
    <property type="term" value="F:protein dimerization activity"/>
    <property type="evidence" value="ECO:0007669"/>
    <property type="project" value="InterPro"/>
</dbReference>
<dbReference type="GO" id="GO:0071266">
    <property type="term" value="P:'de novo' L-methionine biosynthetic process"/>
    <property type="evidence" value="ECO:0007669"/>
    <property type="project" value="UniProtKB-UniRule"/>
</dbReference>
<dbReference type="GO" id="GO:0019877">
    <property type="term" value="P:diaminopimelate biosynthetic process"/>
    <property type="evidence" value="ECO:0000314"/>
    <property type="project" value="MTBBASE"/>
</dbReference>
<dbReference type="GO" id="GO:0009097">
    <property type="term" value="P:isoleucine biosynthetic process"/>
    <property type="evidence" value="ECO:0007669"/>
    <property type="project" value="InterPro"/>
</dbReference>
<dbReference type="GO" id="GO:0009089">
    <property type="term" value="P:lysine biosynthetic process via diaminopimelate"/>
    <property type="evidence" value="ECO:0000314"/>
    <property type="project" value="MTBBASE"/>
</dbReference>
<dbReference type="GO" id="GO:0009088">
    <property type="term" value="P:threonine biosynthetic process"/>
    <property type="evidence" value="ECO:0007669"/>
    <property type="project" value="UniProtKB-UniRule"/>
</dbReference>
<dbReference type="CDD" id="cd18131">
    <property type="entry name" value="ASADH_C_bac_euk_like"/>
    <property type="match status" value="1"/>
</dbReference>
<dbReference type="CDD" id="cd02316">
    <property type="entry name" value="VcASADH2_like_N"/>
    <property type="match status" value="1"/>
</dbReference>
<dbReference type="FunFam" id="3.30.360.10:FF:000034">
    <property type="entry name" value="Aspartate-semialdehyde dehydrogenase"/>
    <property type="match status" value="1"/>
</dbReference>
<dbReference type="Gene3D" id="3.30.360.10">
    <property type="entry name" value="Dihydrodipicolinate Reductase, domain 2"/>
    <property type="match status" value="1"/>
</dbReference>
<dbReference type="Gene3D" id="3.40.50.720">
    <property type="entry name" value="NAD(P)-binding Rossmann-like Domain"/>
    <property type="match status" value="1"/>
</dbReference>
<dbReference type="HAMAP" id="MF_02121">
    <property type="entry name" value="ASADH"/>
    <property type="match status" value="1"/>
</dbReference>
<dbReference type="InterPro" id="IPR000319">
    <property type="entry name" value="Asp-semialdehyde_DH_CS"/>
</dbReference>
<dbReference type="InterPro" id="IPR012080">
    <property type="entry name" value="Asp_semialdehyde_DH"/>
</dbReference>
<dbReference type="InterPro" id="IPR005986">
    <property type="entry name" value="Asp_semialdehyde_DH_beta"/>
</dbReference>
<dbReference type="InterPro" id="IPR036291">
    <property type="entry name" value="NAD(P)-bd_dom_sf"/>
</dbReference>
<dbReference type="InterPro" id="IPR000534">
    <property type="entry name" value="Semialdehyde_DH_NAD-bd"/>
</dbReference>
<dbReference type="InterPro" id="IPR012280">
    <property type="entry name" value="Semialdhyde_DH_dimer_dom"/>
</dbReference>
<dbReference type="NCBIfam" id="TIGR01296">
    <property type="entry name" value="asd_B"/>
    <property type="match status" value="1"/>
</dbReference>
<dbReference type="NCBIfam" id="NF011456">
    <property type="entry name" value="PRK14874.1"/>
    <property type="match status" value="1"/>
</dbReference>
<dbReference type="PANTHER" id="PTHR46278:SF2">
    <property type="entry name" value="ASPARTATE-SEMIALDEHYDE DEHYDROGENASE"/>
    <property type="match status" value="1"/>
</dbReference>
<dbReference type="PANTHER" id="PTHR46278">
    <property type="entry name" value="DEHYDROGENASE, PUTATIVE-RELATED"/>
    <property type="match status" value="1"/>
</dbReference>
<dbReference type="Pfam" id="PF01118">
    <property type="entry name" value="Semialdhyde_dh"/>
    <property type="match status" value="1"/>
</dbReference>
<dbReference type="Pfam" id="PF02774">
    <property type="entry name" value="Semialdhyde_dhC"/>
    <property type="match status" value="1"/>
</dbReference>
<dbReference type="PIRSF" id="PIRSF000148">
    <property type="entry name" value="ASA_dh"/>
    <property type="match status" value="1"/>
</dbReference>
<dbReference type="SMART" id="SM00859">
    <property type="entry name" value="Semialdhyde_dh"/>
    <property type="match status" value="1"/>
</dbReference>
<dbReference type="SUPFAM" id="SSF55347">
    <property type="entry name" value="Glyceraldehyde-3-phosphate dehydrogenase-like, C-terminal domain"/>
    <property type="match status" value="1"/>
</dbReference>
<dbReference type="SUPFAM" id="SSF51735">
    <property type="entry name" value="NAD(P)-binding Rossmann-fold domains"/>
    <property type="match status" value="1"/>
</dbReference>
<dbReference type="PROSITE" id="PS01103">
    <property type="entry name" value="ASD"/>
    <property type="match status" value="1"/>
</dbReference>
<feature type="chain" id="PRO_0000141383" description="Aspartate-semialdehyde dehydrogenase">
    <location>
        <begin position="1"/>
        <end position="345"/>
    </location>
</feature>
<feature type="active site" description="Acyl-thioester intermediate" evidence="9">
    <location>
        <position position="130"/>
    </location>
</feature>
<feature type="active site" description="Proton acceptor" evidence="1">
    <location>
        <position position="256"/>
    </location>
</feature>
<feature type="binding site" evidence="1">
    <location>
        <begin position="11"/>
        <end position="14"/>
    </location>
    <ligand>
        <name>NADP(+)</name>
        <dbReference type="ChEBI" id="CHEBI:58349"/>
    </ligand>
</feature>
<feature type="binding site" evidence="1">
    <location>
        <begin position="39"/>
        <end position="40"/>
    </location>
    <ligand>
        <name>NADP(+)</name>
        <dbReference type="ChEBI" id="CHEBI:58349"/>
    </ligand>
</feature>
<feature type="binding site" evidence="1">
    <location>
        <position position="99"/>
    </location>
    <ligand>
        <name>phosphate</name>
        <dbReference type="ChEBI" id="CHEBI:43474"/>
    </ligand>
</feature>
<feature type="binding site" evidence="1">
    <location>
        <position position="157"/>
    </location>
    <ligand>
        <name>substrate</name>
    </ligand>
</feature>
<feature type="binding site" evidence="1">
    <location>
        <begin position="160"/>
        <end position="161"/>
    </location>
    <ligand>
        <name>NADP(+)</name>
        <dbReference type="ChEBI" id="CHEBI:58349"/>
    </ligand>
</feature>
<feature type="binding site" evidence="1">
    <location>
        <position position="227"/>
    </location>
    <ligand>
        <name>phosphate</name>
        <dbReference type="ChEBI" id="CHEBI:43474"/>
    </ligand>
</feature>
<feature type="binding site" evidence="1">
    <location>
        <position position="249"/>
    </location>
    <ligand>
        <name>substrate</name>
    </ligand>
</feature>
<feature type="binding site" evidence="1">
    <location>
        <position position="325"/>
    </location>
    <ligand>
        <name>NADP(+)</name>
        <dbReference type="ChEBI" id="CHEBI:58349"/>
    </ligand>
</feature>
<feature type="strand" evidence="10">
    <location>
        <begin position="3"/>
        <end position="9"/>
    </location>
</feature>
<feature type="helix" evidence="10">
    <location>
        <begin position="13"/>
        <end position="24"/>
    </location>
</feature>
<feature type="strand" evidence="10">
    <location>
        <begin position="29"/>
        <end position="36"/>
    </location>
</feature>
<feature type="turn" evidence="10">
    <location>
        <begin position="38"/>
        <end position="40"/>
    </location>
</feature>
<feature type="strand" evidence="10">
    <location>
        <begin position="44"/>
        <end position="47"/>
    </location>
</feature>
<feature type="strand" evidence="10">
    <location>
        <begin position="50"/>
        <end position="56"/>
    </location>
</feature>
<feature type="turn" evidence="10">
    <location>
        <begin position="57"/>
        <end position="59"/>
    </location>
</feature>
<feature type="strand" evidence="10">
    <location>
        <begin position="66"/>
        <end position="70"/>
    </location>
</feature>
<feature type="helix" evidence="10">
    <location>
        <begin position="74"/>
        <end position="86"/>
    </location>
</feature>
<feature type="strand" evidence="10">
    <location>
        <begin position="90"/>
        <end position="93"/>
    </location>
</feature>
<feature type="turn" evidence="10">
    <location>
        <begin position="97"/>
        <end position="100"/>
    </location>
</feature>
<feature type="turn" evidence="10">
    <location>
        <begin position="109"/>
        <end position="111"/>
    </location>
</feature>
<feature type="helix" evidence="10">
    <location>
        <begin position="113"/>
        <end position="116"/>
    </location>
</feature>
<feature type="strand" evidence="10">
    <location>
        <begin position="123"/>
        <end position="126"/>
    </location>
</feature>
<feature type="helix" evidence="10">
    <location>
        <begin position="130"/>
        <end position="146"/>
    </location>
</feature>
<feature type="strand" evidence="10">
    <location>
        <begin position="148"/>
        <end position="157"/>
    </location>
</feature>
<feature type="helix" evidence="10">
    <location>
        <begin position="159"/>
        <end position="162"/>
    </location>
</feature>
<feature type="helix" evidence="10">
    <location>
        <begin position="164"/>
        <end position="177"/>
    </location>
</feature>
<feature type="helix" evidence="10">
    <location>
        <begin position="178"/>
        <end position="185"/>
    </location>
</feature>
<feature type="strand" evidence="10">
    <location>
        <begin position="197"/>
        <end position="201"/>
    </location>
</feature>
<feature type="strand" evidence="10">
    <location>
        <begin position="216"/>
        <end position="219"/>
    </location>
</feature>
<feature type="helix" evidence="10">
    <location>
        <begin position="223"/>
        <end position="236"/>
    </location>
</feature>
<feature type="strand" evidence="10">
    <location>
        <begin position="242"/>
        <end position="246"/>
    </location>
</feature>
<feature type="strand" evidence="10">
    <location>
        <begin position="256"/>
        <end position="266"/>
    </location>
</feature>
<feature type="helix" evidence="10">
    <location>
        <begin position="270"/>
        <end position="279"/>
    </location>
</feature>
<feature type="strand" evidence="10">
    <location>
        <begin position="283"/>
        <end position="285"/>
    </location>
</feature>
<feature type="helix" evidence="10">
    <location>
        <begin position="291"/>
        <end position="294"/>
    </location>
</feature>
<feature type="strand" evidence="10">
    <location>
        <begin position="298"/>
        <end position="307"/>
    </location>
</feature>
<feature type="helix" evidence="10">
    <location>
        <begin position="312"/>
        <end position="314"/>
    </location>
</feature>
<feature type="strand" evidence="10">
    <location>
        <begin position="316"/>
        <end position="323"/>
    </location>
</feature>
<feature type="turn" evidence="10">
    <location>
        <begin position="325"/>
        <end position="330"/>
    </location>
</feature>
<feature type="helix" evidence="10">
    <location>
        <begin position="331"/>
        <end position="341"/>
    </location>
</feature>
<proteinExistence type="evidence at protein level"/>
<keyword id="KW-0002">3D-structure</keyword>
<keyword id="KW-0028">Amino-acid biosynthesis</keyword>
<keyword id="KW-0220">Diaminopimelate biosynthesis</keyword>
<keyword id="KW-0457">Lysine biosynthesis</keyword>
<keyword id="KW-0486">Methionine biosynthesis</keyword>
<keyword id="KW-0521">NADP</keyword>
<keyword id="KW-0560">Oxidoreductase</keyword>
<keyword id="KW-1185">Reference proteome</keyword>
<keyword id="KW-0791">Threonine biosynthesis</keyword>
<keyword id="KW-0843">Virulence</keyword>
<organism>
    <name type="scientific">Mycobacterium tuberculosis (strain ATCC 25618 / H37Rv)</name>
    <dbReference type="NCBI Taxonomy" id="83332"/>
    <lineage>
        <taxon>Bacteria</taxon>
        <taxon>Bacillati</taxon>
        <taxon>Actinomycetota</taxon>
        <taxon>Actinomycetes</taxon>
        <taxon>Mycobacteriales</taxon>
        <taxon>Mycobacteriaceae</taxon>
        <taxon>Mycobacterium</taxon>
        <taxon>Mycobacterium tuberculosis complex</taxon>
    </lineage>
</organism>
<gene>
    <name evidence="7" type="primary">asd</name>
    <name type="ordered locus">Rv3708c</name>
    <name type="ORF">MTV025.056c</name>
</gene>